<reference key="1">
    <citation type="journal article" date="2001" name="Nature">
        <title>Complete genome sequence of a multiple drug resistant Salmonella enterica serovar Typhi CT18.</title>
        <authorList>
            <person name="Parkhill J."/>
            <person name="Dougan G."/>
            <person name="James K.D."/>
            <person name="Thomson N.R."/>
            <person name="Pickard D."/>
            <person name="Wain J."/>
            <person name="Churcher C.M."/>
            <person name="Mungall K.L."/>
            <person name="Bentley S.D."/>
            <person name="Holden M.T.G."/>
            <person name="Sebaihia M."/>
            <person name="Baker S."/>
            <person name="Basham D."/>
            <person name="Brooks K."/>
            <person name="Chillingworth T."/>
            <person name="Connerton P."/>
            <person name="Cronin A."/>
            <person name="Davis P."/>
            <person name="Davies R.M."/>
            <person name="Dowd L."/>
            <person name="White N."/>
            <person name="Farrar J."/>
            <person name="Feltwell T."/>
            <person name="Hamlin N."/>
            <person name="Haque A."/>
            <person name="Hien T.T."/>
            <person name="Holroyd S."/>
            <person name="Jagels K."/>
            <person name="Krogh A."/>
            <person name="Larsen T.S."/>
            <person name="Leather S."/>
            <person name="Moule S."/>
            <person name="O'Gaora P."/>
            <person name="Parry C."/>
            <person name="Quail M.A."/>
            <person name="Rutherford K.M."/>
            <person name="Simmonds M."/>
            <person name="Skelton J."/>
            <person name="Stevens K."/>
            <person name="Whitehead S."/>
            <person name="Barrell B.G."/>
        </authorList>
    </citation>
    <scope>NUCLEOTIDE SEQUENCE [LARGE SCALE GENOMIC DNA]</scope>
    <source>
        <strain>CT18</strain>
    </source>
</reference>
<reference key="2">
    <citation type="journal article" date="2003" name="J. Bacteriol.">
        <title>Comparative genomics of Salmonella enterica serovar Typhi strains Ty2 and CT18.</title>
        <authorList>
            <person name="Deng W."/>
            <person name="Liou S.-R."/>
            <person name="Plunkett G. III"/>
            <person name="Mayhew G.F."/>
            <person name="Rose D.J."/>
            <person name="Burland V."/>
            <person name="Kodoyianni V."/>
            <person name="Schwartz D.C."/>
            <person name="Blattner F.R."/>
        </authorList>
    </citation>
    <scope>NUCLEOTIDE SEQUENCE [LARGE SCALE GENOMIC DNA]</scope>
    <source>
        <strain>ATCC 700931 / Ty2</strain>
    </source>
</reference>
<dbReference type="EC" id="2.7.7.72" evidence="1"/>
<dbReference type="EC" id="3.1.3.-" evidence="1"/>
<dbReference type="EC" id="3.1.4.-" evidence="1"/>
<dbReference type="EMBL" id="AL513382">
    <property type="protein sequence ID" value="CAD07729.1"/>
    <property type="molecule type" value="Genomic_DNA"/>
</dbReference>
<dbReference type="EMBL" id="AE014613">
    <property type="protein sequence ID" value="AAO70667.1"/>
    <property type="molecule type" value="Genomic_DNA"/>
</dbReference>
<dbReference type="RefSeq" id="NP_457595.1">
    <property type="nucleotide sequence ID" value="NC_003198.1"/>
</dbReference>
<dbReference type="RefSeq" id="WP_000708457.1">
    <property type="nucleotide sequence ID" value="NZ_WSUR01000003.1"/>
</dbReference>
<dbReference type="SMR" id="Q8Z3M9"/>
<dbReference type="STRING" id="220341.gene:17587238"/>
<dbReference type="KEGG" id="stt:t3124"/>
<dbReference type="KEGG" id="sty:STY3383"/>
<dbReference type="PATRIC" id="fig|220341.7.peg.3444"/>
<dbReference type="eggNOG" id="COG0617">
    <property type="taxonomic scope" value="Bacteria"/>
</dbReference>
<dbReference type="HOGENOM" id="CLU_015961_1_1_6"/>
<dbReference type="OMA" id="GWTFHGH"/>
<dbReference type="OrthoDB" id="9805698at2"/>
<dbReference type="Proteomes" id="UP000000541">
    <property type="component" value="Chromosome"/>
</dbReference>
<dbReference type="Proteomes" id="UP000002670">
    <property type="component" value="Chromosome"/>
</dbReference>
<dbReference type="GO" id="GO:0005524">
    <property type="term" value="F:ATP binding"/>
    <property type="evidence" value="ECO:0007669"/>
    <property type="project" value="UniProtKB-UniRule"/>
</dbReference>
<dbReference type="GO" id="GO:0004810">
    <property type="term" value="F:CCA tRNA nucleotidyltransferase activity"/>
    <property type="evidence" value="ECO:0007669"/>
    <property type="project" value="UniProtKB-UniRule"/>
</dbReference>
<dbReference type="GO" id="GO:0004112">
    <property type="term" value="F:cyclic-nucleotide phosphodiesterase activity"/>
    <property type="evidence" value="ECO:0007669"/>
    <property type="project" value="UniProtKB-UniRule"/>
</dbReference>
<dbReference type="GO" id="GO:0000287">
    <property type="term" value="F:magnesium ion binding"/>
    <property type="evidence" value="ECO:0007669"/>
    <property type="project" value="UniProtKB-UniRule"/>
</dbReference>
<dbReference type="GO" id="GO:0016791">
    <property type="term" value="F:phosphatase activity"/>
    <property type="evidence" value="ECO:0007669"/>
    <property type="project" value="UniProtKB-UniRule"/>
</dbReference>
<dbReference type="GO" id="GO:0000049">
    <property type="term" value="F:tRNA binding"/>
    <property type="evidence" value="ECO:0007669"/>
    <property type="project" value="UniProtKB-UniRule"/>
</dbReference>
<dbReference type="GO" id="GO:0042245">
    <property type="term" value="P:RNA repair"/>
    <property type="evidence" value="ECO:0007669"/>
    <property type="project" value="UniProtKB-KW"/>
</dbReference>
<dbReference type="GO" id="GO:0001680">
    <property type="term" value="P:tRNA 3'-terminal CCA addition"/>
    <property type="evidence" value="ECO:0007669"/>
    <property type="project" value="UniProtKB-UniRule"/>
</dbReference>
<dbReference type="CDD" id="cd00077">
    <property type="entry name" value="HDc"/>
    <property type="match status" value="1"/>
</dbReference>
<dbReference type="CDD" id="cd05398">
    <property type="entry name" value="NT_ClassII-CCAase"/>
    <property type="match status" value="1"/>
</dbReference>
<dbReference type="FunFam" id="1.10.3090.10:FF:000001">
    <property type="entry name" value="Multifunctional CCA protein"/>
    <property type="match status" value="1"/>
</dbReference>
<dbReference type="FunFam" id="3.30.460.10:FF:000016">
    <property type="entry name" value="Multifunctional CCA protein"/>
    <property type="match status" value="1"/>
</dbReference>
<dbReference type="Gene3D" id="3.30.460.10">
    <property type="entry name" value="Beta Polymerase, domain 2"/>
    <property type="match status" value="1"/>
</dbReference>
<dbReference type="Gene3D" id="1.10.3090.10">
    <property type="entry name" value="cca-adding enzyme, domain 2"/>
    <property type="match status" value="1"/>
</dbReference>
<dbReference type="HAMAP" id="MF_01261">
    <property type="entry name" value="CCA_bact_type1"/>
    <property type="match status" value="1"/>
</dbReference>
<dbReference type="HAMAP" id="MF_01262">
    <property type="entry name" value="CCA_bact_type2"/>
    <property type="match status" value="1"/>
</dbReference>
<dbReference type="InterPro" id="IPR012006">
    <property type="entry name" value="CCA_bact"/>
</dbReference>
<dbReference type="InterPro" id="IPR003607">
    <property type="entry name" value="HD/PDEase_dom"/>
</dbReference>
<dbReference type="InterPro" id="IPR006674">
    <property type="entry name" value="HD_domain"/>
</dbReference>
<dbReference type="InterPro" id="IPR043519">
    <property type="entry name" value="NT_sf"/>
</dbReference>
<dbReference type="InterPro" id="IPR002646">
    <property type="entry name" value="PolA_pol_head_dom"/>
</dbReference>
<dbReference type="InterPro" id="IPR032828">
    <property type="entry name" value="PolyA_RNA-bd"/>
</dbReference>
<dbReference type="InterPro" id="IPR050124">
    <property type="entry name" value="tRNA_CCA-adding_enzyme"/>
</dbReference>
<dbReference type="NCBIfam" id="NF008137">
    <property type="entry name" value="PRK10885.1"/>
    <property type="match status" value="1"/>
</dbReference>
<dbReference type="PANTHER" id="PTHR47545">
    <property type="entry name" value="MULTIFUNCTIONAL CCA PROTEIN"/>
    <property type="match status" value="1"/>
</dbReference>
<dbReference type="PANTHER" id="PTHR47545:SF1">
    <property type="entry name" value="MULTIFUNCTIONAL CCA PROTEIN"/>
    <property type="match status" value="1"/>
</dbReference>
<dbReference type="Pfam" id="PF01966">
    <property type="entry name" value="HD"/>
    <property type="match status" value="1"/>
</dbReference>
<dbReference type="Pfam" id="PF01743">
    <property type="entry name" value="PolyA_pol"/>
    <property type="match status" value="1"/>
</dbReference>
<dbReference type="Pfam" id="PF12627">
    <property type="entry name" value="PolyA_pol_RNAbd"/>
    <property type="match status" value="1"/>
</dbReference>
<dbReference type="PIRSF" id="PIRSF000813">
    <property type="entry name" value="CCA_bact"/>
    <property type="match status" value="1"/>
</dbReference>
<dbReference type="SUPFAM" id="SSF81301">
    <property type="entry name" value="Nucleotidyltransferase"/>
    <property type="match status" value="1"/>
</dbReference>
<dbReference type="SUPFAM" id="SSF81891">
    <property type="entry name" value="Poly A polymerase C-terminal region-like"/>
    <property type="match status" value="1"/>
</dbReference>
<dbReference type="PROSITE" id="PS51831">
    <property type="entry name" value="HD"/>
    <property type="match status" value="1"/>
</dbReference>
<name>CCA_SALTI</name>
<keyword id="KW-0067">ATP-binding</keyword>
<keyword id="KW-0378">Hydrolase</keyword>
<keyword id="KW-0460">Magnesium</keyword>
<keyword id="KW-0479">Metal-binding</keyword>
<keyword id="KW-0511">Multifunctional enzyme</keyword>
<keyword id="KW-0533">Nickel</keyword>
<keyword id="KW-0547">Nucleotide-binding</keyword>
<keyword id="KW-0548">Nucleotidyltransferase</keyword>
<keyword id="KW-0692">RNA repair</keyword>
<keyword id="KW-0694">RNA-binding</keyword>
<keyword id="KW-0808">Transferase</keyword>
<keyword id="KW-0819">tRNA processing</keyword>
<accession>Q8Z3M9</accession>
<accession>Q7C751</accession>
<organism>
    <name type="scientific">Salmonella typhi</name>
    <dbReference type="NCBI Taxonomy" id="90370"/>
    <lineage>
        <taxon>Bacteria</taxon>
        <taxon>Pseudomonadati</taxon>
        <taxon>Pseudomonadota</taxon>
        <taxon>Gammaproteobacteria</taxon>
        <taxon>Enterobacterales</taxon>
        <taxon>Enterobacteriaceae</taxon>
        <taxon>Salmonella</taxon>
    </lineage>
</organism>
<feature type="chain" id="PRO_0000138999" description="Multifunctional CCA protein">
    <location>
        <begin position="1"/>
        <end position="413"/>
    </location>
</feature>
<feature type="domain" description="HD" evidence="1">
    <location>
        <begin position="228"/>
        <end position="329"/>
    </location>
</feature>
<feature type="binding site" evidence="1">
    <location>
        <position position="8"/>
    </location>
    <ligand>
        <name>ATP</name>
        <dbReference type="ChEBI" id="CHEBI:30616"/>
    </ligand>
</feature>
<feature type="binding site" evidence="1">
    <location>
        <position position="8"/>
    </location>
    <ligand>
        <name>CTP</name>
        <dbReference type="ChEBI" id="CHEBI:37563"/>
    </ligand>
</feature>
<feature type="binding site" evidence="1">
    <location>
        <position position="11"/>
    </location>
    <ligand>
        <name>ATP</name>
        <dbReference type="ChEBI" id="CHEBI:30616"/>
    </ligand>
</feature>
<feature type="binding site" evidence="1">
    <location>
        <position position="11"/>
    </location>
    <ligand>
        <name>CTP</name>
        <dbReference type="ChEBI" id="CHEBI:37563"/>
    </ligand>
</feature>
<feature type="binding site" evidence="1">
    <location>
        <position position="21"/>
    </location>
    <ligand>
        <name>Mg(2+)</name>
        <dbReference type="ChEBI" id="CHEBI:18420"/>
    </ligand>
</feature>
<feature type="binding site" evidence="1">
    <location>
        <position position="23"/>
    </location>
    <ligand>
        <name>Mg(2+)</name>
        <dbReference type="ChEBI" id="CHEBI:18420"/>
    </ligand>
</feature>
<feature type="binding site" evidence="1">
    <location>
        <position position="91"/>
    </location>
    <ligand>
        <name>ATP</name>
        <dbReference type="ChEBI" id="CHEBI:30616"/>
    </ligand>
</feature>
<feature type="binding site" evidence="1">
    <location>
        <position position="91"/>
    </location>
    <ligand>
        <name>CTP</name>
        <dbReference type="ChEBI" id="CHEBI:37563"/>
    </ligand>
</feature>
<feature type="binding site" evidence="1">
    <location>
        <position position="137"/>
    </location>
    <ligand>
        <name>ATP</name>
        <dbReference type="ChEBI" id="CHEBI:30616"/>
    </ligand>
</feature>
<feature type="binding site" evidence="1">
    <location>
        <position position="137"/>
    </location>
    <ligand>
        <name>CTP</name>
        <dbReference type="ChEBI" id="CHEBI:37563"/>
    </ligand>
</feature>
<feature type="binding site" evidence="1">
    <location>
        <position position="140"/>
    </location>
    <ligand>
        <name>ATP</name>
        <dbReference type="ChEBI" id="CHEBI:30616"/>
    </ligand>
</feature>
<feature type="binding site" evidence="1">
    <location>
        <position position="140"/>
    </location>
    <ligand>
        <name>CTP</name>
        <dbReference type="ChEBI" id="CHEBI:37563"/>
    </ligand>
</feature>
<evidence type="ECO:0000255" key="1">
    <source>
        <dbReference type="HAMAP-Rule" id="MF_01261"/>
    </source>
</evidence>
<comment type="function">
    <text evidence="1">Catalyzes the addition and repair of the essential 3'-terminal CCA sequence in tRNAs without using a nucleic acid template. Adds these three nucleotides in the order of C, C, and A to the tRNA nucleotide-73, using CTP and ATP as substrates and producing inorganic pyrophosphate. tRNA 3'-terminal CCA addition is required both for tRNA processing and repair. Also involved in tRNA surveillance by mediating tandem CCA addition to generate a CCACCA at the 3' terminus of unstable tRNAs. While stable tRNAs receive only 3'-terminal CCA, unstable tRNAs are marked with CCACCA and rapidly degraded.</text>
</comment>
<comment type="catalytic activity">
    <reaction evidence="1">
        <text>a tRNA precursor + 2 CTP + ATP = a tRNA with a 3' CCA end + 3 diphosphate</text>
        <dbReference type="Rhea" id="RHEA:14433"/>
        <dbReference type="Rhea" id="RHEA-COMP:10465"/>
        <dbReference type="Rhea" id="RHEA-COMP:10468"/>
        <dbReference type="ChEBI" id="CHEBI:30616"/>
        <dbReference type="ChEBI" id="CHEBI:33019"/>
        <dbReference type="ChEBI" id="CHEBI:37563"/>
        <dbReference type="ChEBI" id="CHEBI:74896"/>
        <dbReference type="ChEBI" id="CHEBI:83071"/>
        <dbReference type="EC" id="2.7.7.72"/>
    </reaction>
</comment>
<comment type="catalytic activity">
    <reaction evidence="1">
        <text>a tRNA with a 3' CCA end + 2 CTP + ATP = a tRNA with a 3' CCACCA end + 3 diphosphate</text>
        <dbReference type="Rhea" id="RHEA:76235"/>
        <dbReference type="Rhea" id="RHEA-COMP:10468"/>
        <dbReference type="Rhea" id="RHEA-COMP:18655"/>
        <dbReference type="ChEBI" id="CHEBI:30616"/>
        <dbReference type="ChEBI" id="CHEBI:33019"/>
        <dbReference type="ChEBI" id="CHEBI:37563"/>
        <dbReference type="ChEBI" id="CHEBI:83071"/>
        <dbReference type="ChEBI" id="CHEBI:195187"/>
    </reaction>
    <physiologicalReaction direction="left-to-right" evidence="1">
        <dbReference type="Rhea" id="RHEA:76236"/>
    </physiologicalReaction>
</comment>
<comment type="cofactor">
    <cofactor evidence="1">
        <name>Mg(2+)</name>
        <dbReference type="ChEBI" id="CHEBI:18420"/>
    </cofactor>
    <text evidence="1">Magnesium is required for nucleotidyltransferase activity.</text>
</comment>
<comment type="cofactor">
    <cofactor evidence="1">
        <name>Ni(2+)</name>
        <dbReference type="ChEBI" id="CHEBI:49786"/>
    </cofactor>
    <text evidence="1">Nickel for phosphatase activity.</text>
</comment>
<comment type="subunit">
    <text evidence="1">Monomer. Can also form homodimers and oligomers.</text>
</comment>
<comment type="domain">
    <text evidence="1">Comprises two domains: an N-terminal domain containing the nucleotidyltransferase activity and a C-terminal HD domain associated with both phosphodiesterase and phosphatase activities.</text>
</comment>
<comment type="miscellaneous">
    <text evidence="1">A single active site specifically recognizes both ATP and CTP and is responsible for their addition.</text>
</comment>
<comment type="similarity">
    <text evidence="1">Belongs to the tRNA nucleotidyltransferase/poly(A) polymerase family. Bacterial CCA-adding enzyme type 1 subfamily.</text>
</comment>
<protein>
    <recommendedName>
        <fullName evidence="1">Multifunctional CCA protein</fullName>
    </recommendedName>
    <domain>
        <recommendedName>
            <fullName evidence="1">CCA-adding enzyme</fullName>
            <ecNumber evidence="1">2.7.7.72</ecNumber>
        </recommendedName>
        <alternativeName>
            <fullName evidence="1">CCA tRNA nucleotidyltransferase</fullName>
        </alternativeName>
        <alternativeName>
            <fullName evidence="1">tRNA CCA-pyrophosphorylase</fullName>
        </alternativeName>
        <alternativeName>
            <fullName evidence="1">tRNA adenylyl-/cytidylyl-transferase</fullName>
        </alternativeName>
        <alternativeName>
            <fullName evidence="1">tRNA nucleotidyltransferase</fullName>
        </alternativeName>
        <alternativeName>
            <fullName evidence="1">tRNA-NT</fullName>
        </alternativeName>
    </domain>
    <domain>
        <recommendedName>
            <fullName evidence="1">2'-nucleotidase</fullName>
            <ecNumber evidence="1">3.1.3.-</ecNumber>
        </recommendedName>
    </domain>
    <domain>
        <recommendedName>
            <fullName evidence="1">2',3'-cyclic phosphodiesterase</fullName>
            <ecNumber evidence="1">3.1.4.-</ecNumber>
        </recommendedName>
    </domain>
    <domain>
        <recommendedName>
            <fullName evidence="1">Phosphatase</fullName>
            <ecNumber evidence="1">3.1.3.-</ecNumber>
        </recommendedName>
    </domain>
</protein>
<sequence length="413" mass="46562">MKIYLVGGAVRDALLGLPVKDKDWVVVGATPQEMLDAGYQQVGRDFPVFLHPQTHEEYALARTERKSGSGYTGFTCYAAPDVTLEADLQRRDLTINALARDDDGQIIDPYHGRRDLEARLLRHVSPAFGEDPLRVLRVARFAARYAHLSFRIADETLTLMREMTAAGELEHLTPERVWKETENALTTRNPQVYFQVLRDCGALRVLFPEIDALFGVPAPAKWHPEIDTGVHTLMTLSMAAMLSPQLDVRFATLCHDVGKGLTPKNLWPRHHGHGPVGVKLVEQLCQRLRVPNDLRDLAKLVAAYHDLIHTFPILQPKTIVKLFDAIDAWRKPQRVEQIALTSEADVRGRTGFEASDYPQGRWLREAWQVAQAVPTKEVVEAGFKGIEIREELTKRRIAAVANWKEKRCPNPAS</sequence>
<gene>
    <name evidence="1" type="primary">cca</name>
    <name type="ordered locus">STY3383</name>
    <name type="ordered locus">t3124</name>
</gene>
<proteinExistence type="inferred from homology"/>